<keyword id="KW-0175">Coiled coil</keyword>
<keyword id="KW-0488">Methylation</keyword>
<keyword id="KW-0597">Phosphoprotein</keyword>
<keyword id="KW-1185">Reference proteome</keyword>
<keyword id="KW-0833">Ubl conjugation pathway</keyword>
<evidence type="ECO:0000250" key="1"/>
<evidence type="ECO:0000255" key="2"/>
<evidence type="ECO:0000256" key="3">
    <source>
        <dbReference type="SAM" id="MobiDB-lite"/>
    </source>
</evidence>
<evidence type="ECO:0007744" key="4">
    <source>
    </source>
</evidence>
<evidence type="ECO:0007744" key="5">
    <source>
    </source>
</evidence>
<gene>
    <name type="primary">Fbxo41</name>
    <name type="synonym">D6Ertd538e</name>
    <name type="synonym">Kiaa1940</name>
</gene>
<comment type="function">
    <text evidence="1">Substrate-recognition component of the SCF (SKP1-CUL1-F-box protein)-type E3 ubiquitin ligase complex.</text>
</comment>
<comment type="subunit">
    <text evidence="1">Directly interacts with SKP1 and CUL1.</text>
</comment>
<name>FBX41_MOUSE</name>
<accession>Q6NS60</accession>
<accession>Q6P7W4</accession>
<accession>Q6ZPG1</accession>
<dbReference type="EMBL" id="BC061475">
    <property type="protein sequence ID" value="AAH61475.1"/>
    <property type="molecule type" value="mRNA"/>
</dbReference>
<dbReference type="EMBL" id="BC070445">
    <property type="protein sequence ID" value="AAH70445.1"/>
    <property type="molecule type" value="mRNA"/>
</dbReference>
<dbReference type="EMBL" id="AK129466">
    <property type="protein sequence ID" value="BAC98276.1"/>
    <property type="molecule type" value="mRNA"/>
</dbReference>
<dbReference type="CCDS" id="CCDS20296.1"/>
<dbReference type="RefSeq" id="NP_001001160.1">
    <property type="nucleotide sequence ID" value="NM_001001160.3"/>
</dbReference>
<dbReference type="RefSeq" id="NP_001276603.1">
    <property type="nucleotide sequence ID" value="NM_001289674.1"/>
</dbReference>
<dbReference type="RefSeq" id="NP_001276604.1">
    <property type="nucleotide sequence ID" value="NM_001289675.1"/>
</dbReference>
<dbReference type="SMR" id="Q6NS60"/>
<dbReference type="BioGRID" id="236950">
    <property type="interactions" value="15"/>
</dbReference>
<dbReference type="FunCoup" id="Q6NS60">
    <property type="interactions" value="176"/>
</dbReference>
<dbReference type="IntAct" id="Q6NS60">
    <property type="interactions" value="4"/>
</dbReference>
<dbReference type="MINT" id="Q6NS60"/>
<dbReference type="STRING" id="10090.ENSMUSP00000124524"/>
<dbReference type="GlyGen" id="Q6NS60">
    <property type="glycosylation" value="3 sites, 1 O-linked glycan (2 sites)"/>
</dbReference>
<dbReference type="iPTMnet" id="Q6NS60"/>
<dbReference type="PhosphoSitePlus" id="Q6NS60"/>
<dbReference type="SwissPalm" id="Q6NS60"/>
<dbReference type="PaxDb" id="10090-ENSMUSP00000124754"/>
<dbReference type="ProteomicsDB" id="271676"/>
<dbReference type="Antibodypedia" id="65168">
    <property type="antibodies" value="58 antibodies from 19 providers"/>
</dbReference>
<dbReference type="DNASU" id="330369"/>
<dbReference type="Ensembl" id="ENSMUST00000159062.8">
    <property type="protein sequence ID" value="ENSMUSP00000125671.2"/>
    <property type="gene ID" value="ENSMUSG00000047013.16"/>
</dbReference>
<dbReference type="Ensembl" id="ENSMUST00000161078.8">
    <property type="protein sequence ID" value="ENSMUSP00000124524.2"/>
    <property type="gene ID" value="ENSMUSG00000047013.16"/>
</dbReference>
<dbReference type="Ensembl" id="ENSMUST00000161546.2">
    <property type="protein sequence ID" value="ENSMUSP00000124754.2"/>
    <property type="gene ID" value="ENSMUSG00000047013.16"/>
</dbReference>
<dbReference type="GeneID" id="330369"/>
<dbReference type="KEGG" id="mmu:330369"/>
<dbReference type="UCSC" id="uc009cpw.2">
    <property type="organism name" value="mouse"/>
</dbReference>
<dbReference type="AGR" id="MGI:1261912"/>
<dbReference type="CTD" id="150726"/>
<dbReference type="MGI" id="MGI:1261912">
    <property type="gene designation" value="Fbxo41"/>
</dbReference>
<dbReference type="VEuPathDB" id="HostDB:ENSMUSG00000047013"/>
<dbReference type="eggNOG" id="KOG4341">
    <property type="taxonomic scope" value="Eukaryota"/>
</dbReference>
<dbReference type="GeneTree" id="ENSGT00530000063713"/>
<dbReference type="HOGENOM" id="CLU_018140_0_0_1"/>
<dbReference type="InParanoid" id="Q6NS60"/>
<dbReference type="OMA" id="CGTTPNC"/>
<dbReference type="OrthoDB" id="6482165at2759"/>
<dbReference type="PhylomeDB" id="Q6NS60"/>
<dbReference type="TreeFam" id="TF329439"/>
<dbReference type="Reactome" id="R-MMU-8951664">
    <property type="pathway name" value="Neddylation"/>
</dbReference>
<dbReference type="Reactome" id="R-MMU-983168">
    <property type="pathway name" value="Antigen processing: Ubiquitination &amp; Proteasome degradation"/>
</dbReference>
<dbReference type="BioGRID-ORCS" id="330369">
    <property type="hits" value="2 hits in 82 CRISPR screens"/>
</dbReference>
<dbReference type="CD-CODE" id="CE726F99">
    <property type="entry name" value="Postsynaptic density"/>
</dbReference>
<dbReference type="PRO" id="PR:Q6NS60"/>
<dbReference type="Proteomes" id="UP000000589">
    <property type="component" value="Chromosome 6"/>
</dbReference>
<dbReference type="RNAct" id="Q6NS60">
    <property type="molecule type" value="protein"/>
</dbReference>
<dbReference type="Bgee" id="ENSMUSG00000047013">
    <property type="expression patterns" value="Expressed in lateral septal nucleus and 91 other cell types or tissues"/>
</dbReference>
<dbReference type="ExpressionAtlas" id="Q6NS60">
    <property type="expression patterns" value="baseline and differential"/>
</dbReference>
<dbReference type="GO" id="GO:0045202">
    <property type="term" value="C:synapse"/>
    <property type="evidence" value="ECO:0007669"/>
    <property type="project" value="GOC"/>
</dbReference>
<dbReference type="GO" id="GO:0007268">
    <property type="term" value="P:chemical synaptic transmission"/>
    <property type="evidence" value="ECO:0000315"/>
    <property type="project" value="MGI"/>
</dbReference>
<dbReference type="GO" id="GO:0021542">
    <property type="term" value="P:dentate gyrus development"/>
    <property type="evidence" value="ECO:0000315"/>
    <property type="project" value="MGI"/>
</dbReference>
<dbReference type="GO" id="GO:0010467">
    <property type="term" value="P:gene expression"/>
    <property type="evidence" value="ECO:0000315"/>
    <property type="project" value="MGI"/>
</dbReference>
<dbReference type="GO" id="GO:0021766">
    <property type="term" value="P:hippocampus development"/>
    <property type="evidence" value="ECO:0000315"/>
    <property type="project" value="MGI"/>
</dbReference>
<dbReference type="GO" id="GO:0042551">
    <property type="term" value="P:neuron maturation"/>
    <property type="evidence" value="ECO:0000315"/>
    <property type="project" value="MGI"/>
</dbReference>
<dbReference type="GO" id="GO:0001764">
    <property type="term" value="P:neuron migration"/>
    <property type="evidence" value="ECO:0000315"/>
    <property type="project" value="MGI"/>
</dbReference>
<dbReference type="CDD" id="cd22109">
    <property type="entry name" value="F-box_FBXO41"/>
    <property type="match status" value="1"/>
</dbReference>
<dbReference type="FunFam" id="3.80.10.10:FF:000229">
    <property type="entry name" value="F-box only protein 41"/>
    <property type="match status" value="1"/>
</dbReference>
<dbReference type="Gene3D" id="1.20.1280.50">
    <property type="match status" value="1"/>
</dbReference>
<dbReference type="Gene3D" id="3.80.10.10">
    <property type="entry name" value="Ribonuclease Inhibitor"/>
    <property type="match status" value="1"/>
</dbReference>
<dbReference type="InterPro" id="IPR036047">
    <property type="entry name" value="F-box-like_dom_sf"/>
</dbReference>
<dbReference type="InterPro" id="IPR001810">
    <property type="entry name" value="F-box_dom"/>
</dbReference>
<dbReference type="InterPro" id="IPR057038">
    <property type="entry name" value="FBX41/ZN365_Znf-C2H2"/>
</dbReference>
<dbReference type="InterPro" id="IPR052283">
    <property type="entry name" value="GenomicStab_NeuMorph_Reg"/>
</dbReference>
<dbReference type="InterPro" id="IPR032675">
    <property type="entry name" value="LRR_dom_sf"/>
</dbReference>
<dbReference type="PANTHER" id="PTHR15739:SF4">
    <property type="entry name" value="F-BOX ONLY PROTEIN 41"/>
    <property type="match status" value="1"/>
</dbReference>
<dbReference type="PANTHER" id="PTHR15739">
    <property type="entry name" value="ZINC FINGER PROTEIN"/>
    <property type="match status" value="1"/>
</dbReference>
<dbReference type="Pfam" id="PF12937">
    <property type="entry name" value="F-box-like"/>
    <property type="match status" value="1"/>
</dbReference>
<dbReference type="Pfam" id="PF23165">
    <property type="entry name" value="zf-C2H2_FBX41"/>
    <property type="match status" value="1"/>
</dbReference>
<dbReference type="SUPFAM" id="SSF81383">
    <property type="entry name" value="F-box domain"/>
    <property type="match status" value="1"/>
</dbReference>
<dbReference type="SUPFAM" id="SSF52047">
    <property type="entry name" value="RNI-like"/>
    <property type="match status" value="1"/>
</dbReference>
<reference key="1">
    <citation type="journal article" date="2004" name="Genome Res.">
        <title>The status, quality, and expansion of the NIH full-length cDNA project: the Mammalian Gene Collection (MGC).</title>
        <authorList>
            <consortium name="The MGC Project Team"/>
        </authorList>
    </citation>
    <scope>NUCLEOTIDE SEQUENCE [LARGE SCALE MRNA]</scope>
    <source>
        <strain>C57BL/6J</strain>
        <tissue>Brain</tissue>
    </source>
</reference>
<reference key="2">
    <citation type="journal article" date="2003" name="DNA Res.">
        <title>Prediction of the coding sequences of mouse homologues of KIAA gene: III. The complete nucleotide sequences of 500 mouse KIAA-homologous cDNAs identified by screening of terminal sequences of cDNA clones randomly sampled from size-fractionated libraries.</title>
        <authorList>
            <person name="Okazaki N."/>
            <person name="Kikuno R."/>
            <person name="Ohara R."/>
            <person name="Inamoto S."/>
            <person name="Koseki H."/>
            <person name="Hiraoka S."/>
            <person name="Saga Y."/>
            <person name="Nagase T."/>
            <person name="Ohara O."/>
            <person name="Koga H."/>
        </authorList>
    </citation>
    <scope>NUCLEOTIDE SEQUENCE [LARGE SCALE MRNA] OF 9-873</scope>
    <source>
        <tissue>Brain</tissue>
    </source>
</reference>
<reference key="3">
    <citation type="journal article" date="2006" name="Mol. Cell. Proteomics">
        <title>Comprehensive identification of phosphorylation sites in postsynaptic density preparations.</title>
        <authorList>
            <person name="Trinidad J.C."/>
            <person name="Specht C.G."/>
            <person name="Thalhammer A."/>
            <person name="Schoepfer R."/>
            <person name="Burlingame A.L."/>
        </authorList>
    </citation>
    <scope>IDENTIFICATION BY MASS SPECTROMETRY [LARGE SCALE ANALYSIS]</scope>
    <source>
        <tissue>Brain</tissue>
    </source>
</reference>
<reference key="4">
    <citation type="journal article" date="2010" name="Cell">
        <title>A tissue-specific atlas of mouse protein phosphorylation and expression.</title>
        <authorList>
            <person name="Huttlin E.L."/>
            <person name="Jedrychowski M.P."/>
            <person name="Elias J.E."/>
            <person name="Goswami T."/>
            <person name="Rad R."/>
            <person name="Beausoleil S.A."/>
            <person name="Villen J."/>
            <person name="Haas W."/>
            <person name="Sowa M.E."/>
            <person name="Gygi S.P."/>
        </authorList>
    </citation>
    <scope>PHOSPHORYLATION [LARGE SCALE ANALYSIS] AT SER-476; THR-477 AND SER-760</scope>
    <scope>IDENTIFICATION BY MASS SPECTROMETRY [LARGE SCALE ANALYSIS]</scope>
    <source>
        <tissue>Brain</tissue>
    </source>
</reference>
<reference key="5">
    <citation type="journal article" date="2014" name="Mol. Cell. Proteomics">
        <title>Immunoaffinity enrichment and mass spectrometry analysis of protein methylation.</title>
        <authorList>
            <person name="Guo A."/>
            <person name="Gu H."/>
            <person name="Zhou J."/>
            <person name="Mulhern D."/>
            <person name="Wang Y."/>
            <person name="Lee K.A."/>
            <person name="Yang V."/>
            <person name="Aguiar M."/>
            <person name="Kornhauser J."/>
            <person name="Jia X."/>
            <person name="Ren J."/>
            <person name="Beausoleil S.A."/>
            <person name="Silva J.C."/>
            <person name="Vemulapalli V."/>
            <person name="Bedford M.T."/>
            <person name="Comb M.J."/>
        </authorList>
    </citation>
    <scope>METHYLATION [LARGE SCALE ANALYSIS] AT ARG-358</scope>
    <scope>IDENTIFICATION BY MASS SPECTROMETRY [LARGE SCALE ANALYSIS]</scope>
    <source>
        <tissue>Brain</tissue>
        <tissue>Embryo</tissue>
    </source>
</reference>
<sequence>MASLDLPYRCPRCGEHKRFRSLSSLRAHLEYSHTYETLYILSKTNSICDGAAAAAAAAAAASGFPLAPEPAALLAVPGARREVFESTSFQGKEQATGPSPAGPHLLHHHHHHAPLAHFPADLVPASLPCEELAEPGLVPAARYALREIEIPLGELFARKSVASSACSTPPPGPGPGPCSGPSSASPASPSPADVAYEEGLARLKIRALEKLEVDRRLERLSEEVEQKIAGQVGRLQAELERKAAELETARQESARLGREKEELEERASELSRQVDVSVELLASLKQDLVHKEQELSRKQQEVVQIDQFLKETAAREASAKLRLQQFIEELLERADRAERQLQVISSSCGSTPSASLGRGGGGSASGPGVRGPGRMREHHAGSAVPSTYAVSRHGSSPSTGASSRVPAASQSSGCYDSDSLELPRPEEGPSEDSGPGGLGSRAQATNGGSERSQAPRSSGLRRQAIQNWQRRPRRHSTEGEEGDVSDVGSRTTESEAEGPSDVPRPGPAVAGPLNSCRLSARPEGGSGRGRRVERGSPSRSNEVISPEILKMRAALFCIFTYLDTRTLLHAAEVCRDWRFVARHPAVWTRVLLENARVCSKFLAMLAQWCTQAHSLTLQNLKPRQRGKKESKEEYARSTRGCLEAGLESLLKAAGGNLLILRISHCPNILTDRSLWLASCYCRALQAVTYRSATDPVGHEVIWALGAGCRDIVSLQVAPLHPCQQPTRFSNRCLQMIGRCWPHLRALGVGGAGCGVQGLASLARNCMRLQVLELDHVSEITQEVAAEVCREGLKGLEMLVLTATPVTPKALLHFNSICRNLKSIVVQIGIADYFKEPSSPEAQKLFEDMVTKLQALRRRPGFSKILHIKVEGGC</sequence>
<feature type="chain" id="PRO_0000119941" description="F-box only protein 41">
    <location>
        <begin position="1"/>
        <end position="873"/>
    </location>
</feature>
<feature type="domain" description="F-box">
    <location>
        <begin position="548"/>
        <end position="592"/>
    </location>
</feature>
<feature type="region of interest" description="Disordered" evidence="3">
    <location>
        <begin position="85"/>
        <end position="110"/>
    </location>
</feature>
<feature type="region of interest" description="Disordered" evidence="3">
    <location>
        <begin position="163"/>
        <end position="193"/>
    </location>
</feature>
<feature type="region of interest" description="Disordered" evidence="3">
    <location>
        <begin position="345"/>
        <end position="540"/>
    </location>
</feature>
<feature type="coiled-coil region" evidence="2">
    <location>
        <begin position="207"/>
        <end position="349"/>
    </location>
</feature>
<feature type="compositionally biased region" description="Polar residues" evidence="3">
    <location>
        <begin position="85"/>
        <end position="97"/>
    </location>
</feature>
<feature type="compositionally biased region" description="Pro residues" evidence="3">
    <location>
        <begin position="168"/>
        <end position="178"/>
    </location>
</feature>
<feature type="compositionally biased region" description="Low complexity" evidence="3">
    <location>
        <begin position="179"/>
        <end position="192"/>
    </location>
</feature>
<feature type="compositionally biased region" description="Gly residues" evidence="3">
    <location>
        <begin position="357"/>
        <end position="371"/>
    </location>
</feature>
<feature type="compositionally biased region" description="Polar residues" evidence="3">
    <location>
        <begin position="384"/>
        <end position="414"/>
    </location>
</feature>
<feature type="compositionally biased region" description="Polar residues" evidence="3">
    <location>
        <begin position="442"/>
        <end position="456"/>
    </location>
</feature>
<feature type="modified residue" description="Omega-N-methylarginine" evidence="5">
    <location>
        <position position="358"/>
    </location>
</feature>
<feature type="modified residue" description="Phosphoserine" evidence="4">
    <location>
        <position position="476"/>
    </location>
</feature>
<feature type="modified residue" description="Phosphothreonine" evidence="4">
    <location>
        <position position="477"/>
    </location>
</feature>
<feature type="modified residue" description="Phosphoserine" evidence="4">
    <location>
        <position position="760"/>
    </location>
</feature>
<organism>
    <name type="scientific">Mus musculus</name>
    <name type="common">Mouse</name>
    <dbReference type="NCBI Taxonomy" id="10090"/>
    <lineage>
        <taxon>Eukaryota</taxon>
        <taxon>Metazoa</taxon>
        <taxon>Chordata</taxon>
        <taxon>Craniata</taxon>
        <taxon>Vertebrata</taxon>
        <taxon>Euteleostomi</taxon>
        <taxon>Mammalia</taxon>
        <taxon>Eutheria</taxon>
        <taxon>Euarchontoglires</taxon>
        <taxon>Glires</taxon>
        <taxon>Rodentia</taxon>
        <taxon>Myomorpha</taxon>
        <taxon>Muroidea</taxon>
        <taxon>Muridae</taxon>
        <taxon>Murinae</taxon>
        <taxon>Mus</taxon>
        <taxon>Mus</taxon>
    </lineage>
</organism>
<proteinExistence type="evidence at protein level"/>
<protein>
    <recommendedName>
        <fullName>F-box only protein 41</fullName>
    </recommendedName>
</protein>